<dbReference type="EMBL" id="AY596932">
    <property type="protein sequence ID" value="AAT97254.1"/>
    <property type="molecule type" value="mRNA"/>
</dbReference>
<dbReference type="SMR" id="Q53B54"/>
<dbReference type="GO" id="GO:0005576">
    <property type="term" value="C:extracellular region"/>
    <property type="evidence" value="ECO:0007669"/>
    <property type="project" value="UniProtKB-SubCell"/>
</dbReference>
<dbReference type="GO" id="GO:0030550">
    <property type="term" value="F:acetylcholine receptor inhibitor activity"/>
    <property type="evidence" value="ECO:0007669"/>
    <property type="project" value="UniProtKB-KW"/>
</dbReference>
<dbReference type="GO" id="GO:0099106">
    <property type="term" value="F:ion channel regulator activity"/>
    <property type="evidence" value="ECO:0007669"/>
    <property type="project" value="UniProtKB-KW"/>
</dbReference>
<dbReference type="GO" id="GO:0090729">
    <property type="term" value="F:toxin activity"/>
    <property type="evidence" value="ECO:0007669"/>
    <property type="project" value="UniProtKB-KW"/>
</dbReference>
<dbReference type="CDD" id="cd00206">
    <property type="entry name" value="TFP_snake_toxin"/>
    <property type="match status" value="1"/>
</dbReference>
<dbReference type="Gene3D" id="2.10.60.10">
    <property type="entry name" value="CD59"/>
    <property type="match status" value="1"/>
</dbReference>
<dbReference type="InterPro" id="IPR003571">
    <property type="entry name" value="Snake_3FTx"/>
</dbReference>
<dbReference type="InterPro" id="IPR045860">
    <property type="entry name" value="Snake_toxin-like_sf"/>
</dbReference>
<dbReference type="InterPro" id="IPR018354">
    <property type="entry name" value="Snake_toxin_con_site"/>
</dbReference>
<dbReference type="InterPro" id="IPR054131">
    <property type="entry name" value="Toxin_cobra-type"/>
</dbReference>
<dbReference type="Pfam" id="PF21947">
    <property type="entry name" value="Toxin_cobra-type"/>
    <property type="match status" value="1"/>
</dbReference>
<dbReference type="SUPFAM" id="SSF57302">
    <property type="entry name" value="Snake toxin-like"/>
    <property type="match status" value="1"/>
</dbReference>
<dbReference type="PROSITE" id="PS00272">
    <property type="entry name" value="SNAKE_TOXIN"/>
    <property type="match status" value="1"/>
</dbReference>
<comment type="function">
    <text evidence="2">Binds with high affinity to muscular (alpha-1/CHRNA1) and neuronal (alpha-7/CHRNA7) nicotinic acetylcholine receptor (nAChR) and inhibits acetylcholine from binding to the receptor, thereby impairing neuromuscular and neuronal transmission.</text>
</comment>
<comment type="subcellular location">
    <subcellularLocation>
        <location evidence="3">Secreted</location>
    </subcellularLocation>
</comment>
<comment type="tissue specificity">
    <text evidence="4">Expressed by the venom gland.</text>
</comment>
<comment type="toxic dose">
    <text evidence="3">LD(50) is 210 ug/kg by intraperitoneal injection into mice.</text>
</comment>
<comment type="similarity">
    <text evidence="4">Belongs to the three-finger toxin family. Long-chain subfamily. Type II alpha-neurotoxin sub-subfamily.</text>
</comment>
<name>3L217_OPHHA</name>
<feature type="chain" id="PRO_5000093324" description="Long neurotoxin OH-17">
    <location>
        <begin position="1"/>
        <end position="72"/>
    </location>
</feature>
<feature type="disulfide bond" evidence="1">
    <location>
        <begin position="3"/>
        <end position="21"/>
    </location>
</feature>
<feature type="disulfide bond" evidence="1">
    <location>
        <begin position="14"/>
        <end position="42"/>
    </location>
</feature>
<feature type="disulfide bond" evidence="1">
    <location>
        <begin position="27"/>
        <end position="31"/>
    </location>
</feature>
<feature type="disulfide bond" evidence="1">
    <location>
        <begin position="46"/>
        <end position="57"/>
    </location>
</feature>
<feature type="disulfide bond" evidence="1">
    <location>
        <begin position="58"/>
        <end position="63"/>
    </location>
</feature>
<keyword id="KW-0008">Acetylcholine receptor inhibiting toxin</keyword>
<keyword id="KW-0903">Direct protein sequencing</keyword>
<keyword id="KW-1015">Disulfide bond</keyword>
<keyword id="KW-0872">Ion channel impairing toxin</keyword>
<keyword id="KW-0528">Neurotoxin</keyword>
<keyword id="KW-0629">Postsynaptic neurotoxin</keyword>
<keyword id="KW-0964">Secreted</keyword>
<keyword id="KW-0800">Toxin</keyword>
<sequence length="72" mass="8037">TKCYITPDVKSETCPDGENICYTKSWCDVFCTSRGKRIDLGCAATCPKVKPGVDIKCCSTDNCNPFTPWKRH</sequence>
<accession>Q53B54</accession>
<organism>
    <name type="scientific">Ophiophagus hannah</name>
    <name type="common">King cobra</name>
    <name type="synonym">Naja hannah</name>
    <dbReference type="NCBI Taxonomy" id="8665"/>
    <lineage>
        <taxon>Eukaryota</taxon>
        <taxon>Metazoa</taxon>
        <taxon>Chordata</taxon>
        <taxon>Craniata</taxon>
        <taxon>Vertebrata</taxon>
        <taxon>Euteleostomi</taxon>
        <taxon>Lepidosauria</taxon>
        <taxon>Squamata</taxon>
        <taxon>Bifurcata</taxon>
        <taxon>Unidentata</taxon>
        <taxon>Episquamata</taxon>
        <taxon>Toxicofera</taxon>
        <taxon>Serpentes</taxon>
        <taxon>Colubroidea</taxon>
        <taxon>Elapidae</taxon>
        <taxon>Elapinae</taxon>
        <taxon>Ophiophagus</taxon>
    </lineage>
</organism>
<evidence type="ECO:0000250" key="1"/>
<evidence type="ECO:0000250" key="2">
    <source>
        <dbReference type="UniProtKB" id="P60615"/>
    </source>
</evidence>
<evidence type="ECO:0000269" key="3">
    <source>
    </source>
</evidence>
<evidence type="ECO:0000305" key="4"/>
<reference key="1">
    <citation type="journal article" date="2004" name="Toxicon">
        <title>Cloning and purification of alpha-neurotoxins from king cobra (Ophiophagus hannah).</title>
        <authorList>
            <person name="He Y.-Y."/>
            <person name="Lee W.-H."/>
            <person name="Zhang Y."/>
        </authorList>
    </citation>
    <scope>NUCLEOTIDE SEQUENCE [MRNA]</scope>
    <scope>PROTEIN SEQUENCE OF 1-20</scope>
    <scope>TOXIC DOSE</scope>
    <scope>SUBCELLULAR LOCATION</scope>
    <source>
        <tissue>Venom</tissue>
        <tissue>Venom gland</tissue>
    </source>
</reference>
<reference key="2">
    <citation type="journal article" date="2013" name="Proc. Natl. Acad. Sci. U.S.A.">
        <title>The king cobra genome reveals dynamic gene evolution and adaptation in the snake venom system.</title>
        <authorList>
            <person name="Vonk F.J."/>
            <person name="Casewell N.R."/>
            <person name="Henkel C.V."/>
            <person name="Heimberg A.M."/>
            <person name="Jansen H.J."/>
            <person name="McCleary R.J."/>
            <person name="Kerkkamp H.M."/>
            <person name="Vos R.A."/>
            <person name="Guerreiro I."/>
            <person name="Calvete J.J."/>
            <person name="Wuster W."/>
            <person name="Woods A.E."/>
            <person name="Logan J.M."/>
            <person name="Harrison R.A."/>
            <person name="Castoe T.A."/>
            <person name="de Koning A.P."/>
            <person name="Pollock D.D."/>
            <person name="Yandell M."/>
            <person name="Calderon D."/>
            <person name="Renjifo C."/>
            <person name="Currier R.B."/>
            <person name="Salgado D."/>
            <person name="Pla D."/>
            <person name="Sanz L."/>
            <person name="Hyder A.S."/>
            <person name="Ribeiro J.M."/>
            <person name="Arntzen J.W."/>
            <person name="van den Thillart G.E."/>
            <person name="Boetzer M."/>
            <person name="Pirovano W."/>
            <person name="Dirks R.P."/>
            <person name="Spaink H.P."/>
            <person name="Duboule D."/>
            <person name="McGlinn E."/>
            <person name="Kini R.M."/>
            <person name="Richardson M.K."/>
        </authorList>
    </citation>
    <scope>IDENTIFICATION BY MASS SPECTROMETRY</scope>
    <source>
        <tissue>Venom</tissue>
    </source>
</reference>
<proteinExistence type="evidence at protein level"/>
<protein>
    <recommendedName>
        <fullName>Long neurotoxin OH-17</fullName>
    </recommendedName>
</protein>